<accession>P9WN43</accession>
<accession>L0T8Q8</accession>
<accession>O05314</accession>
<accession>P64241</accession>
<proteinExistence type="evidence at protein level"/>
<protein>
    <recommendedName>
        <fullName evidence="5">Glucose-1-phosphate adenylyltransferase</fullName>
        <ecNumber evidence="1">2.7.7.27</ecNumber>
    </recommendedName>
    <alternativeName>
        <fullName evidence="5">ADP-glucose pyrophosphorylase</fullName>
        <shortName evidence="1">ADPGlc PPase</shortName>
    </alternativeName>
    <alternativeName>
        <fullName evidence="1">ADP-glucose synthase</fullName>
    </alternativeName>
</protein>
<sequence>MREVPHVLGIVLAGGEGKRLYPLTADRAKPAVPFGGAYRLIDFVLSNLVNARYLRICVLTQYKSHSLDRHISQNWRLSGLAGEYITPVPAQQRLGPRWYTGSADAIYQSLNLIYDEDPDYIVVFGADHVYRMDPEQMVRFHIDSGAGATVAGIRVPRENATAFGCIDADDSGRIRSFVEKPLEPPGTPDDPDTTFVSMGNYIFTTKVLIDAIRADADDDHSDHDMGGDIVPRLVADGMAAVYDFSDNEVPGATDRDRAYWRDVGTLDAFYDAHMDLVSVHPVFNLYNKRWPIRGESENLAPAKFVNGGSAQESVVGAGSIISAASVRNSVLSSNVVVDDGAIVEGSVIMPGTRVGRGAVVRHAILDKNVVVGPGEMVGVDLEKDRERFAISAGGVVAVGKGVWI</sequence>
<dbReference type="EC" id="2.7.7.27" evidence="1"/>
<dbReference type="EMBL" id="AL123456">
    <property type="protein sequence ID" value="CCP43969.1"/>
    <property type="molecule type" value="Genomic_DNA"/>
</dbReference>
<dbReference type="PIR" id="C70610">
    <property type="entry name" value="C70610"/>
</dbReference>
<dbReference type="RefSeq" id="NP_215729.1">
    <property type="nucleotide sequence ID" value="NC_000962.3"/>
</dbReference>
<dbReference type="RefSeq" id="WP_003406249.1">
    <property type="nucleotide sequence ID" value="NZ_NVQJ01000039.1"/>
</dbReference>
<dbReference type="SMR" id="P9WN43"/>
<dbReference type="FunCoup" id="P9WN43">
    <property type="interactions" value="128"/>
</dbReference>
<dbReference type="STRING" id="83332.Rv1213"/>
<dbReference type="PaxDb" id="83332-Rv1213"/>
<dbReference type="DNASU" id="887933"/>
<dbReference type="GeneID" id="45425183"/>
<dbReference type="GeneID" id="887933"/>
<dbReference type="KEGG" id="mtu:Rv1213"/>
<dbReference type="KEGG" id="mtv:RVBD_1213"/>
<dbReference type="TubercuList" id="Rv1213"/>
<dbReference type="eggNOG" id="COG0448">
    <property type="taxonomic scope" value="Bacteria"/>
</dbReference>
<dbReference type="InParanoid" id="P9WN43"/>
<dbReference type="OrthoDB" id="9801810at2"/>
<dbReference type="PhylomeDB" id="P9WN43"/>
<dbReference type="BioCyc" id="MetaCyc:G185E-5383-MONOMER"/>
<dbReference type="UniPathway" id="UPA00164"/>
<dbReference type="UniPathway" id="UPA00934"/>
<dbReference type="PHI-base" id="PHI:6731"/>
<dbReference type="Proteomes" id="UP000001584">
    <property type="component" value="Chromosome"/>
</dbReference>
<dbReference type="GO" id="GO:0005829">
    <property type="term" value="C:cytosol"/>
    <property type="evidence" value="ECO:0007005"/>
    <property type="project" value="MTBBASE"/>
</dbReference>
<dbReference type="GO" id="GO:0005524">
    <property type="term" value="F:ATP binding"/>
    <property type="evidence" value="ECO:0007669"/>
    <property type="project" value="UniProtKB-KW"/>
</dbReference>
<dbReference type="GO" id="GO:0008878">
    <property type="term" value="F:glucose-1-phosphate adenylyltransferase activity"/>
    <property type="evidence" value="ECO:0007669"/>
    <property type="project" value="UniProtKB-UniRule"/>
</dbReference>
<dbReference type="GO" id="GO:0045227">
    <property type="term" value="P:capsule polysaccharide biosynthetic process"/>
    <property type="evidence" value="ECO:0007669"/>
    <property type="project" value="UniProtKB-UniPathway"/>
</dbReference>
<dbReference type="GO" id="GO:0009250">
    <property type="term" value="P:glucan biosynthetic process"/>
    <property type="evidence" value="ECO:0000315"/>
    <property type="project" value="MTBBASE"/>
</dbReference>
<dbReference type="GO" id="GO:0005978">
    <property type="term" value="P:glycogen biosynthetic process"/>
    <property type="evidence" value="ECO:0007669"/>
    <property type="project" value="UniProtKB-UniRule"/>
</dbReference>
<dbReference type="CDD" id="cd02508">
    <property type="entry name" value="ADP_Glucose_PP"/>
    <property type="match status" value="1"/>
</dbReference>
<dbReference type="CDD" id="cd04651">
    <property type="entry name" value="LbH_G1P_AT_C"/>
    <property type="match status" value="1"/>
</dbReference>
<dbReference type="FunFam" id="2.160.10.10:FF:000020">
    <property type="entry name" value="Glucose-1-phosphate adenylyltransferase"/>
    <property type="match status" value="1"/>
</dbReference>
<dbReference type="FunFam" id="3.90.550.10:FF:000014">
    <property type="entry name" value="Glucose-1-phosphate adenylyltransferase"/>
    <property type="match status" value="1"/>
</dbReference>
<dbReference type="Gene3D" id="2.160.10.10">
    <property type="entry name" value="Hexapeptide repeat proteins"/>
    <property type="match status" value="1"/>
</dbReference>
<dbReference type="Gene3D" id="3.90.550.10">
    <property type="entry name" value="Spore Coat Polysaccharide Biosynthesis Protein SpsA, Chain A"/>
    <property type="match status" value="1"/>
</dbReference>
<dbReference type="HAMAP" id="MF_00624">
    <property type="entry name" value="GlgC"/>
    <property type="match status" value="1"/>
</dbReference>
<dbReference type="InterPro" id="IPR011831">
    <property type="entry name" value="ADP-Glc_PPase"/>
</dbReference>
<dbReference type="InterPro" id="IPR005836">
    <property type="entry name" value="ADP_Glu_pyroP_CS"/>
</dbReference>
<dbReference type="InterPro" id="IPR023049">
    <property type="entry name" value="GlgC_bac"/>
</dbReference>
<dbReference type="InterPro" id="IPR056818">
    <property type="entry name" value="GlmU/GlgC-like_hexapep"/>
</dbReference>
<dbReference type="InterPro" id="IPR005835">
    <property type="entry name" value="NTP_transferase_dom"/>
</dbReference>
<dbReference type="InterPro" id="IPR029044">
    <property type="entry name" value="Nucleotide-diphossugar_trans"/>
</dbReference>
<dbReference type="InterPro" id="IPR011004">
    <property type="entry name" value="Trimer_LpxA-like_sf"/>
</dbReference>
<dbReference type="NCBIfam" id="TIGR02091">
    <property type="entry name" value="glgC"/>
    <property type="match status" value="1"/>
</dbReference>
<dbReference type="NCBIfam" id="NF001947">
    <property type="entry name" value="PRK00725.1"/>
    <property type="match status" value="1"/>
</dbReference>
<dbReference type="NCBIfam" id="NF002023">
    <property type="entry name" value="PRK00844.1"/>
    <property type="match status" value="1"/>
</dbReference>
<dbReference type="PANTHER" id="PTHR43523:SF2">
    <property type="entry name" value="GLUCOSE-1-PHOSPHATE ADENYLYLTRANSFERASE"/>
    <property type="match status" value="1"/>
</dbReference>
<dbReference type="PANTHER" id="PTHR43523">
    <property type="entry name" value="GLUCOSE-1-PHOSPHATE ADENYLYLTRANSFERASE-RELATED"/>
    <property type="match status" value="1"/>
</dbReference>
<dbReference type="Pfam" id="PF24894">
    <property type="entry name" value="Hexapep_GlmU"/>
    <property type="match status" value="1"/>
</dbReference>
<dbReference type="Pfam" id="PF00483">
    <property type="entry name" value="NTP_transferase"/>
    <property type="match status" value="1"/>
</dbReference>
<dbReference type="SUPFAM" id="SSF53448">
    <property type="entry name" value="Nucleotide-diphospho-sugar transferases"/>
    <property type="match status" value="1"/>
</dbReference>
<dbReference type="SUPFAM" id="SSF51161">
    <property type="entry name" value="Trimeric LpxA-like enzymes"/>
    <property type="match status" value="1"/>
</dbReference>
<dbReference type="PROSITE" id="PS00808">
    <property type="entry name" value="ADP_GLC_PYROPHOSPH_1"/>
    <property type="match status" value="1"/>
</dbReference>
<dbReference type="PROSITE" id="PS00809">
    <property type="entry name" value="ADP_GLC_PYROPHOSPH_2"/>
    <property type="match status" value="1"/>
</dbReference>
<dbReference type="PROSITE" id="PS00810">
    <property type="entry name" value="ADP_GLC_PYROPHOSPH_3"/>
    <property type="match status" value="1"/>
</dbReference>
<keyword id="KW-0067">ATP-binding</keyword>
<keyword id="KW-0972">Capsule biogenesis/degradation</keyword>
<keyword id="KW-0119">Carbohydrate metabolism</keyword>
<keyword id="KW-0320">Glycogen biosynthesis</keyword>
<keyword id="KW-0321">Glycogen metabolism</keyword>
<keyword id="KW-0547">Nucleotide-binding</keyword>
<keyword id="KW-0548">Nucleotidyltransferase</keyword>
<keyword id="KW-1185">Reference proteome</keyword>
<keyword id="KW-0808">Transferase</keyword>
<evidence type="ECO:0000255" key="1">
    <source>
        <dbReference type="HAMAP-Rule" id="MF_00624"/>
    </source>
</evidence>
<evidence type="ECO:0000269" key="2">
    <source>
    </source>
</evidence>
<evidence type="ECO:0000269" key="3">
    <source>
    </source>
</evidence>
<evidence type="ECO:0000303" key="4">
    <source>
    </source>
</evidence>
<evidence type="ECO:0000303" key="5">
    <source>
    </source>
</evidence>
<evidence type="ECO:0000305" key="6"/>
<comment type="function">
    <text evidence="2 3">Involved in the biosynthesis of ADP-glucose building block required in the biosynthesis of maltose-1-phosphate (M1P) and in the elongation reactions to produce linear alpha-1,4-glucans. Catalyzes the reaction between ATP and alpha-D-glucose 1-phosphate (G1P) to produce pyrophosphate and ADP-Glc.</text>
</comment>
<comment type="catalytic activity">
    <reaction evidence="1">
        <text>alpha-D-glucose 1-phosphate + ATP + H(+) = ADP-alpha-D-glucose + diphosphate</text>
        <dbReference type="Rhea" id="RHEA:12120"/>
        <dbReference type="ChEBI" id="CHEBI:15378"/>
        <dbReference type="ChEBI" id="CHEBI:30616"/>
        <dbReference type="ChEBI" id="CHEBI:33019"/>
        <dbReference type="ChEBI" id="CHEBI:57498"/>
        <dbReference type="ChEBI" id="CHEBI:58601"/>
        <dbReference type="EC" id="2.7.7.27"/>
    </reaction>
</comment>
<comment type="pathway">
    <text evidence="2 3">Glycan biosynthesis; glycogen biosynthesis.</text>
</comment>
<comment type="pathway">
    <text evidence="2 3">Capsule biogenesis; capsule polysaccharide biosynthesis.</text>
</comment>
<comment type="disruption phenotype">
    <text evidence="2 3">Inactivation of glgC reduces by half the extracellular (capsular) alpha-D-glucan and intracellular glycogen contents (PubMed:18808383, PubMed:27513637). Cells lacking this gene are not affected in their multiplication or persistence in the BALB/c mouse infection model (PubMed:18808383). Combined inactivation of both glgC and treS results in a complete absence of maltose-1-phosphate (M1P) and alpha-glucan, whereas combined inactivation of both glgC and otsA results only in a complete absence of alpha-glucan (PubMed:27513637).</text>
</comment>
<comment type="miscellaneous">
    <text evidence="3">Maltose-1-phosphate (M1P) is generated by two alternative routes: the TreS-Pep2 branch and the GlgC-GlgM branch, however it seems that TreS-Pep2 branch provides most of M1P for the GlgE pathway in M.tuberculosis.</text>
</comment>
<comment type="similarity">
    <text evidence="6">Belongs to the bacterial/plant glucose-1-phosphate adenylyltransferase family.</text>
</comment>
<organism>
    <name type="scientific">Mycobacterium tuberculosis (strain ATCC 25618 / H37Rv)</name>
    <dbReference type="NCBI Taxonomy" id="83332"/>
    <lineage>
        <taxon>Bacteria</taxon>
        <taxon>Bacillati</taxon>
        <taxon>Actinomycetota</taxon>
        <taxon>Actinomycetes</taxon>
        <taxon>Mycobacteriales</taxon>
        <taxon>Mycobacteriaceae</taxon>
        <taxon>Mycobacterium</taxon>
        <taxon>Mycobacterium tuberculosis complex</taxon>
    </lineage>
</organism>
<feature type="chain" id="PRO_0000195309" description="Glucose-1-phosphate adenylyltransferase">
    <location>
        <begin position="1"/>
        <end position="404"/>
    </location>
</feature>
<feature type="binding site" evidence="1">
    <location>
        <position position="99"/>
    </location>
    <ligand>
        <name>alpha-D-glucose 1-phosphate</name>
        <dbReference type="ChEBI" id="CHEBI:58601"/>
    </ligand>
</feature>
<feature type="binding site" evidence="1">
    <location>
        <position position="164"/>
    </location>
    <ligand>
        <name>alpha-D-glucose 1-phosphate</name>
        <dbReference type="ChEBI" id="CHEBI:58601"/>
    </ligand>
</feature>
<feature type="binding site" evidence="1">
    <location>
        <begin position="179"/>
        <end position="180"/>
    </location>
    <ligand>
        <name>alpha-D-glucose 1-phosphate</name>
        <dbReference type="ChEBI" id="CHEBI:58601"/>
    </ligand>
</feature>
<feature type="binding site" evidence="1">
    <location>
        <position position="197"/>
    </location>
    <ligand>
        <name>alpha-D-glucose 1-phosphate</name>
        <dbReference type="ChEBI" id="CHEBI:58601"/>
    </ligand>
</feature>
<gene>
    <name evidence="4" type="primary">glgC</name>
    <name type="ordered locus">Rv1213</name>
    <name type="ORF">MTCI364.25</name>
</gene>
<reference key="1">
    <citation type="journal article" date="1998" name="Nature">
        <title>Deciphering the biology of Mycobacterium tuberculosis from the complete genome sequence.</title>
        <authorList>
            <person name="Cole S.T."/>
            <person name="Brosch R."/>
            <person name="Parkhill J."/>
            <person name="Garnier T."/>
            <person name="Churcher C.M."/>
            <person name="Harris D.E."/>
            <person name="Gordon S.V."/>
            <person name="Eiglmeier K."/>
            <person name="Gas S."/>
            <person name="Barry C.E. III"/>
            <person name="Tekaia F."/>
            <person name="Badcock K."/>
            <person name="Basham D."/>
            <person name="Brown D."/>
            <person name="Chillingworth T."/>
            <person name="Connor R."/>
            <person name="Davies R.M."/>
            <person name="Devlin K."/>
            <person name="Feltwell T."/>
            <person name="Gentles S."/>
            <person name="Hamlin N."/>
            <person name="Holroyd S."/>
            <person name="Hornsby T."/>
            <person name="Jagels K."/>
            <person name="Krogh A."/>
            <person name="McLean J."/>
            <person name="Moule S."/>
            <person name="Murphy L.D."/>
            <person name="Oliver S."/>
            <person name="Osborne J."/>
            <person name="Quail M.A."/>
            <person name="Rajandream M.A."/>
            <person name="Rogers J."/>
            <person name="Rutter S."/>
            <person name="Seeger K."/>
            <person name="Skelton S."/>
            <person name="Squares S."/>
            <person name="Squares R."/>
            <person name="Sulston J.E."/>
            <person name="Taylor K."/>
            <person name="Whitehead S."/>
            <person name="Barrell B.G."/>
        </authorList>
    </citation>
    <scope>NUCLEOTIDE SEQUENCE [LARGE SCALE GENOMIC DNA]</scope>
    <source>
        <strain>ATCC 25618 / H37Rv</strain>
    </source>
</reference>
<reference key="2">
    <citation type="journal article" date="2008" name="Mol. Microbiol.">
        <title>Capsular glucan and intracellular glycogen of Mycobacterium tuberculosis: biosynthesis and impact on the persistence in mice.</title>
        <authorList>
            <person name="Sambou T."/>
            <person name="Dinadayala P."/>
            <person name="Stadthagen G."/>
            <person name="Barilone N."/>
            <person name="Bordat Y."/>
            <person name="Constant P."/>
            <person name="Levillain F."/>
            <person name="Neyrolles O."/>
            <person name="Gicquel B."/>
            <person name="Lemassu A."/>
            <person name="Daffe M."/>
            <person name="Jackson M."/>
        </authorList>
    </citation>
    <scope>FUNCTION</scope>
    <scope>DISRUPTION PHENOTYPE</scope>
    <scope>PATHWAY</scope>
    <source>
        <strain>ATCC 25618 / H37Rv</strain>
    </source>
</reference>
<reference key="3">
    <citation type="journal article" date="2011" name="Mol. Cell. Proteomics">
        <title>Proteogenomic analysis of Mycobacterium tuberculosis by high resolution mass spectrometry.</title>
        <authorList>
            <person name="Kelkar D.S."/>
            <person name="Kumar D."/>
            <person name="Kumar P."/>
            <person name="Balakrishnan L."/>
            <person name="Muthusamy B."/>
            <person name="Yadav A.K."/>
            <person name="Shrivastava P."/>
            <person name="Marimuthu A."/>
            <person name="Anand S."/>
            <person name="Sundaram H."/>
            <person name="Kingsbury R."/>
            <person name="Harsha H.C."/>
            <person name="Nair B."/>
            <person name="Prasad T.S."/>
            <person name="Chauhan D.S."/>
            <person name="Katoch K."/>
            <person name="Katoch V.M."/>
            <person name="Kumar P."/>
            <person name="Chaerkady R."/>
            <person name="Ramachandran S."/>
            <person name="Dash D."/>
            <person name="Pandey A."/>
        </authorList>
    </citation>
    <scope>IDENTIFICATION BY MASS SPECTROMETRY [LARGE SCALE ANALYSIS]</scope>
    <source>
        <strain>ATCC 25618 / H37Rv</strain>
    </source>
</reference>
<reference key="4">
    <citation type="journal article" date="2016" name="PLoS Pathog.">
        <title>Metabolic network for the biosynthesis of intra- and extracellular alpha-glucans required for virulence of Mycobacterium tuberculosis.</title>
        <authorList>
            <person name="Koliwer-Brandl H."/>
            <person name="Syson K."/>
            <person name="van de Weerd R."/>
            <person name="Chandra G."/>
            <person name="Appelmelk B."/>
            <person name="Alber M."/>
            <person name="Ioerger T.R."/>
            <person name="Jacobs W.R. Jr."/>
            <person name="Geurtsen J."/>
            <person name="Bornemann S."/>
            <person name="Kalscheuer R."/>
        </authorList>
    </citation>
    <scope>FUNCTION</scope>
    <scope>DISRUPTION PHENOTYPE</scope>
    <scope>PATHWAY</scope>
</reference>
<name>GLGC_MYCTU</name>